<comment type="function">
    <text evidence="1">Catalyzes the attachment of tyrosine to tRNA(Tyr) in a two-step reaction: tyrosine is first activated by ATP to form Tyr-AMP and then transferred to the acceptor end of tRNA(Tyr).</text>
</comment>
<comment type="catalytic activity">
    <reaction evidence="1">
        <text>tRNA(Tyr) + L-tyrosine + ATP = L-tyrosyl-tRNA(Tyr) + AMP + diphosphate + H(+)</text>
        <dbReference type="Rhea" id="RHEA:10220"/>
        <dbReference type="Rhea" id="RHEA-COMP:9706"/>
        <dbReference type="Rhea" id="RHEA-COMP:9707"/>
        <dbReference type="ChEBI" id="CHEBI:15378"/>
        <dbReference type="ChEBI" id="CHEBI:30616"/>
        <dbReference type="ChEBI" id="CHEBI:33019"/>
        <dbReference type="ChEBI" id="CHEBI:58315"/>
        <dbReference type="ChEBI" id="CHEBI:78442"/>
        <dbReference type="ChEBI" id="CHEBI:78536"/>
        <dbReference type="ChEBI" id="CHEBI:456215"/>
        <dbReference type="EC" id="6.1.1.1"/>
    </reaction>
</comment>
<comment type="subunit">
    <text evidence="1">Homodimer.</text>
</comment>
<comment type="subcellular location">
    <subcellularLocation>
        <location evidence="1">Cytoplasm</location>
    </subcellularLocation>
</comment>
<comment type="similarity">
    <text evidence="1">Belongs to the class-I aminoacyl-tRNA synthetase family. TyrS type 1 subfamily.</text>
</comment>
<evidence type="ECO:0000255" key="1">
    <source>
        <dbReference type="HAMAP-Rule" id="MF_02006"/>
    </source>
</evidence>
<dbReference type="EC" id="6.1.1.1" evidence="1"/>
<dbReference type="EMBL" id="CP000056">
    <property type="protein sequence ID" value="AAX71193.1"/>
    <property type="molecule type" value="Genomic_DNA"/>
</dbReference>
<dbReference type="RefSeq" id="WP_011284417.1">
    <property type="nucleotide sequence ID" value="NC_007296.2"/>
</dbReference>
<dbReference type="SMR" id="Q48VR3"/>
<dbReference type="KEGG" id="spb:M28_Spy0079"/>
<dbReference type="HOGENOM" id="CLU_024003_0_3_9"/>
<dbReference type="GO" id="GO:0005829">
    <property type="term" value="C:cytosol"/>
    <property type="evidence" value="ECO:0007669"/>
    <property type="project" value="TreeGrafter"/>
</dbReference>
<dbReference type="GO" id="GO:0005524">
    <property type="term" value="F:ATP binding"/>
    <property type="evidence" value="ECO:0007669"/>
    <property type="project" value="UniProtKB-UniRule"/>
</dbReference>
<dbReference type="GO" id="GO:0003723">
    <property type="term" value="F:RNA binding"/>
    <property type="evidence" value="ECO:0007669"/>
    <property type="project" value="UniProtKB-KW"/>
</dbReference>
<dbReference type="GO" id="GO:0004831">
    <property type="term" value="F:tyrosine-tRNA ligase activity"/>
    <property type="evidence" value="ECO:0007669"/>
    <property type="project" value="UniProtKB-UniRule"/>
</dbReference>
<dbReference type="GO" id="GO:0006437">
    <property type="term" value="P:tyrosyl-tRNA aminoacylation"/>
    <property type="evidence" value="ECO:0007669"/>
    <property type="project" value="UniProtKB-UniRule"/>
</dbReference>
<dbReference type="CDD" id="cd00165">
    <property type="entry name" value="S4"/>
    <property type="match status" value="1"/>
</dbReference>
<dbReference type="CDD" id="cd00805">
    <property type="entry name" value="TyrRS_core"/>
    <property type="match status" value="1"/>
</dbReference>
<dbReference type="FunFam" id="1.10.240.10:FF:000001">
    <property type="entry name" value="Tyrosine--tRNA ligase"/>
    <property type="match status" value="1"/>
</dbReference>
<dbReference type="FunFam" id="3.40.50.620:FF:000008">
    <property type="entry name" value="Tyrosine--tRNA ligase"/>
    <property type="match status" value="1"/>
</dbReference>
<dbReference type="Gene3D" id="3.40.50.620">
    <property type="entry name" value="HUPs"/>
    <property type="match status" value="1"/>
</dbReference>
<dbReference type="Gene3D" id="3.10.290.10">
    <property type="entry name" value="RNA-binding S4 domain"/>
    <property type="match status" value="1"/>
</dbReference>
<dbReference type="Gene3D" id="1.10.240.10">
    <property type="entry name" value="Tyrosyl-Transfer RNA Synthetase"/>
    <property type="match status" value="1"/>
</dbReference>
<dbReference type="HAMAP" id="MF_02006">
    <property type="entry name" value="Tyr_tRNA_synth_type1"/>
    <property type="match status" value="1"/>
</dbReference>
<dbReference type="InterPro" id="IPR001412">
    <property type="entry name" value="aa-tRNA-synth_I_CS"/>
</dbReference>
<dbReference type="InterPro" id="IPR002305">
    <property type="entry name" value="aa-tRNA-synth_Ic"/>
</dbReference>
<dbReference type="InterPro" id="IPR014729">
    <property type="entry name" value="Rossmann-like_a/b/a_fold"/>
</dbReference>
<dbReference type="InterPro" id="IPR002942">
    <property type="entry name" value="S4_RNA-bd"/>
</dbReference>
<dbReference type="InterPro" id="IPR036986">
    <property type="entry name" value="S4_RNA-bd_sf"/>
</dbReference>
<dbReference type="InterPro" id="IPR054608">
    <property type="entry name" value="SYY-like_C"/>
</dbReference>
<dbReference type="InterPro" id="IPR002307">
    <property type="entry name" value="Tyr-tRNA-ligase"/>
</dbReference>
<dbReference type="InterPro" id="IPR024088">
    <property type="entry name" value="Tyr-tRNA-ligase_bac-type"/>
</dbReference>
<dbReference type="InterPro" id="IPR024107">
    <property type="entry name" value="Tyr-tRNA-ligase_bac_1"/>
</dbReference>
<dbReference type="NCBIfam" id="TIGR00234">
    <property type="entry name" value="tyrS"/>
    <property type="match status" value="1"/>
</dbReference>
<dbReference type="PANTHER" id="PTHR11766:SF0">
    <property type="entry name" value="TYROSINE--TRNA LIGASE, MITOCHONDRIAL"/>
    <property type="match status" value="1"/>
</dbReference>
<dbReference type="PANTHER" id="PTHR11766">
    <property type="entry name" value="TYROSYL-TRNA SYNTHETASE"/>
    <property type="match status" value="1"/>
</dbReference>
<dbReference type="Pfam" id="PF22421">
    <property type="entry name" value="SYY_C-terminal"/>
    <property type="match status" value="1"/>
</dbReference>
<dbReference type="Pfam" id="PF00579">
    <property type="entry name" value="tRNA-synt_1b"/>
    <property type="match status" value="1"/>
</dbReference>
<dbReference type="PRINTS" id="PR01040">
    <property type="entry name" value="TRNASYNTHTYR"/>
</dbReference>
<dbReference type="SMART" id="SM00363">
    <property type="entry name" value="S4"/>
    <property type="match status" value="1"/>
</dbReference>
<dbReference type="SUPFAM" id="SSF55174">
    <property type="entry name" value="Alpha-L RNA-binding motif"/>
    <property type="match status" value="1"/>
</dbReference>
<dbReference type="SUPFAM" id="SSF52374">
    <property type="entry name" value="Nucleotidylyl transferase"/>
    <property type="match status" value="1"/>
</dbReference>
<dbReference type="PROSITE" id="PS00178">
    <property type="entry name" value="AA_TRNA_LIGASE_I"/>
    <property type="match status" value="1"/>
</dbReference>
<dbReference type="PROSITE" id="PS50889">
    <property type="entry name" value="S4"/>
    <property type="match status" value="1"/>
</dbReference>
<proteinExistence type="inferred from homology"/>
<name>SYY_STRPM</name>
<organism>
    <name type="scientific">Streptococcus pyogenes serotype M28 (strain MGAS6180)</name>
    <dbReference type="NCBI Taxonomy" id="319701"/>
    <lineage>
        <taxon>Bacteria</taxon>
        <taxon>Bacillati</taxon>
        <taxon>Bacillota</taxon>
        <taxon>Bacilli</taxon>
        <taxon>Lactobacillales</taxon>
        <taxon>Streptococcaceae</taxon>
        <taxon>Streptococcus</taxon>
    </lineage>
</organism>
<protein>
    <recommendedName>
        <fullName evidence="1">Tyrosine--tRNA ligase</fullName>
        <ecNumber evidence="1">6.1.1.1</ecNumber>
    </recommendedName>
    <alternativeName>
        <fullName evidence="1">Tyrosyl-tRNA synthetase</fullName>
        <shortName evidence="1">TyrRS</shortName>
    </alternativeName>
</protein>
<reference key="1">
    <citation type="journal article" date="2005" name="J. Infect. Dis.">
        <title>Genome sequence of a serotype M28 strain of group A Streptococcus: potential new insights into puerperal sepsis and bacterial disease specificity.</title>
        <authorList>
            <person name="Green N.M."/>
            <person name="Zhang S."/>
            <person name="Porcella S.F."/>
            <person name="Nagiec M.J."/>
            <person name="Barbian K.D."/>
            <person name="Beres S.B."/>
            <person name="Lefebvre R.B."/>
            <person name="Musser J.M."/>
        </authorList>
    </citation>
    <scope>NUCLEOTIDE SEQUENCE [LARGE SCALE GENOMIC DNA]</scope>
    <source>
        <strain>MGAS6180</strain>
    </source>
</reference>
<gene>
    <name evidence="1" type="primary">tyrS</name>
    <name type="ordered locus">M28_Spy0079</name>
</gene>
<sequence>MNIFEELKARGLVFQTTDEQALVKALTEGQVSYYTGYDPTADSLHLGHLVAILTSRRLQLAGHKPYALVGGATGLIGDPSFKDAERSLQTKETVLEWSDKIKGQLSTFLDFENGDNKAELVNNYDWFSQISFIDFLRDVGKYFTVNYMMSKDSVKKRIETGISYTEFAYQIMQGYDFYELNDKHNVTLQIGGSDQWGNMTAGTELLRKKADKTGHVMTVPLITDSTGKKFGKSEGNAVWLDADKTSPYEMYQFWLNVMDDDAVRFLKIFTFLFLDEIAEIETQFNAARHERLAQKTLAREVVTLVHGEEAYKQALNITEQLFAGNIKNLSANELKQGLSNVPNYHVQSEDSLNLVDMLVTAGISPSKRQAREDVQNGAIYINGDRVQDLDYQLSNDDKIDDQLTVIRRGKKKYAVLTY</sequence>
<feature type="chain" id="PRO_0000234792" description="Tyrosine--tRNA ligase">
    <location>
        <begin position="1"/>
        <end position="418"/>
    </location>
</feature>
<feature type="domain" description="S4 RNA-binding" evidence="1">
    <location>
        <begin position="352"/>
        <end position="418"/>
    </location>
</feature>
<feature type="short sequence motif" description="'HIGH' region">
    <location>
        <begin position="39"/>
        <end position="48"/>
    </location>
</feature>
<feature type="short sequence motif" description="'KMSKS' region">
    <location>
        <begin position="229"/>
        <end position="233"/>
    </location>
</feature>
<feature type="binding site" evidence="1">
    <location>
        <position position="34"/>
    </location>
    <ligand>
        <name>L-tyrosine</name>
        <dbReference type="ChEBI" id="CHEBI:58315"/>
    </ligand>
</feature>
<feature type="binding site" evidence="1">
    <location>
        <position position="169"/>
    </location>
    <ligand>
        <name>L-tyrosine</name>
        <dbReference type="ChEBI" id="CHEBI:58315"/>
    </ligand>
</feature>
<feature type="binding site" evidence="1">
    <location>
        <position position="173"/>
    </location>
    <ligand>
        <name>L-tyrosine</name>
        <dbReference type="ChEBI" id="CHEBI:58315"/>
    </ligand>
</feature>
<feature type="binding site" evidence="1">
    <location>
        <position position="232"/>
    </location>
    <ligand>
        <name>ATP</name>
        <dbReference type="ChEBI" id="CHEBI:30616"/>
    </ligand>
</feature>
<keyword id="KW-0030">Aminoacyl-tRNA synthetase</keyword>
<keyword id="KW-0067">ATP-binding</keyword>
<keyword id="KW-0963">Cytoplasm</keyword>
<keyword id="KW-0436">Ligase</keyword>
<keyword id="KW-0547">Nucleotide-binding</keyword>
<keyword id="KW-0648">Protein biosynthesis</keyword>
<keyword id="KW-0694">RNA-binding</keyword>
<accession>Q48VR3</accession>